<keyword id="KW-0030">Aminoacyl-tRNA synthetase</keyword>
<keyword id="KW-0067">ATP-binding</keyword>
<keyword id="KW-0963">Cytoplasm</keyword>
<keyword id="KW-0436">Ligase</keyword>
<keyword id="KW-0479">Metal-binding</keyword>
<keyword id="KW-0547">Nucleotide-binding</keyword>
<keyword id="KW-0648">Protein biosynthesis</keyword>
<keyword id="KW-1185">Reference proteome</keyword>
<keyword id="KW-0862">Zinc</keyword>
<feature type="chain" id="PRO_0000139261" description="Methionine--tRNA ligase">
    <location>
        <begin position="1"/>
        <end position="521"/>
    </location>
</feature>
<feature type="short sequence motif" description="'HIGH' region">
    <location>
        <begin position="14"/>
        <end position="24"/>
    </location>
</feature>
<feature type="short sequence motif" description="'KMSKS' region">
    <location>
        <begin position="306"/>
        <end position="310"/>
    </location>
</feature>
<feature type="binding site" evidence="1">
    <location>
        <position position="129"/>
    </location>
    <ligand>
        <name>Zn(2+)</name>
        <dbReference type="ChEBI" id="CHEBI:29105"/>
    </ligand>
</feature>
<feature type="binding site" evidence="1">
    <location>
        <position position="132"/>
    </location>
    <ligand>
        <name>Zn(2+)</name>
        <dbReference type="ChEBI" id="CHEBI:29105"/>
    </ligand>
</feature>
<feature type="binding site" evidence="1">
    <location>
        <position position="151"/>
    </location>
    <ligand>
        <name>Zn(2+)</name>
        <dbReference type="ChEBI" id="CHEBI:29105"/>
    </ligand>
</feature>
<feature type="binding site" evidence="1">
    <location>
        <position position="155"/>
    </location>
    <ligand>
        <name>Zn(2+)</name>
        <dbReference type="ChEBI" id="CHEBI:29105"/>
    </ligand>
</feature>
<feature type="binding site" evidence="1">
    <location>
        <position position="309"/>
    </location>
    <ligand>
        <name>ATP</name>
        <dbReference type="ChEBI" id="CHEBI:30616"/>
    </ligand>
</feature>
<comment type="function">
    <text evidence="1">Is required not only for elongation of protein synthesis but also for the initiation of all mRNA translation through initiator tRNA(fMet) aminoacylation.</text>
</comment>
<comment type="catalytic activity">
    <reaction evidence="1">
        <text>tRNA(Met) + L-methionine + ATP = L-methionyl-tRNA(Met) + AMP + diphosphate</text>
        <dbReference type="Rhea" id="RHEA:13481"/>
        <dbReference type="Rhea" id="RHEA-COMP:9667"/>
        <dbReference type="Rhea" id="RHEA-COMP:9698"/>
        <dbReference type="ChEBI" id="CHEBI:30616"/>
        <dbReference type="ChEBI" id="CHEBI:33019"/>
        <dbReference type="ChEBI" id="CHEBI:57844"/>
        <dbReference type="ChEBI" id="CHEBI:78442"/>
        <dbReference type="ChEBI" id="CHEBI:78530"/>
        <dbReference type="ChEBI" id="CHEBI:456215"/>
        <dbReference type="EC" id="6.1.1.10"/>
    </reaction>
</comment>
<comment type="cofactor">
    <cofactor evidence="1">
        <name>Zn(2+)</name>
        <dbReference type="ChEBI" id="CHEBI:29105"/>
    </cofactor>
    <text evidence="1">Binds 1 zinc ion per subunit.</text>
</comment>
<comment type="subunit">
    <text evidence="1">Monomer.</text>
</comment>
<comment type="subcellular location">
    <subcellularLocation>
        <location evidence="1">Cytoplasm</location>
    </subcellularLocation>
</comment>
<comment type="similarity">
    <text evidence="1">Belongs to the class-I aminoacyl-tRNA synthetase family. MetG type 2A subfamily.</text>
</comment>
<evidence type="ECO:0000255" key="1">
    <source>
        <dbReference type="HAMAP-Rule" id="MF_01228"/>
    </source>
</evidence>
<organism>
    <name type="scientific">Ureaplasma parvum serovar 3 (strain ATCC 700970)</name>
    <dbReference type="NCBI Taxonomy" id="273119"/>
    <lineage>
        <taxon>Bacteria</taxon>
        <taxon>Bacillati</taxon>
        <taxon>Mycoplasmatota</taxon>
        <taxon>Mycoplasmoidales</taxon>
        <taxon>Mycoplasmoidaceae</taxon>
        <taxon>Ureaplasma</taxon>
    </lineage>
</organism>
<sequence length="521" mass="60831">MLKQKKFFISTPIYYSSGNPHIGHAYTTIIADVLARYKRLFGYDVFFLTGMDEHGQKIQQKAFEENISPKALVDRNSIIFLNLWKRLNISFSKFIRTTQMDHEESVQKVFSYLYKQGKIYLGQWTGYYCVSCEENYNPAEIIKSQDNIMLCRMGHKLETKSEESYFYKMSDQAPFLKTYYQNHPNFIIPNERANEMVNNFLNNLEDLSISRTTFDWGIPIAENPKHVIYVWLDALMNYLTATGYLSNNEELFQKYWCDNETEIVHLLSKEIARFHCIYWPIFLNDLQIRFPSTILSHGWIITKEGKMSKSLGNVIDPNVLIDTYGVDALRYYLMADLSLFRDAIFSEDNLIETYNTQLANSYGNMISRTLGMLKKYRNNIVPKYVGCVLKNDEKLENLINKNIELVQENINKYSIDKALNCIQEILVEANKYIEDNKPWELAKNQQEQELDSLLVHLVKVIQVTTTLLSPILIEGSKKAVEQLNFDESFLTLASLASYDIFNYHKVNDSKPIFARIIVEKQ</sequence>
<name>SYM_UREPA</name>
<reference key="1">
    <citation type="journal article" date="2000" name="Nature">
        <title>The complete sequence of the mucosal pathogen Ureaplasma urealyticum.</title>
        <authorList>
            <person name="Glass J.I."/>
            <person name="Lefkowitz E.J."/>
            <person name="Glass J.S."/>
            <person name="Heiner C.R."/>
            <person name="Chen E.Y."/>
            <person name="Cassell G.H."/>
        </authorList>
    </citation>
    <scope>NUCLEOTIDE SEQUENCE [LARGE SCALE GENOMIC DNA]</scope>
    <source>
        <strain>ATCC 700970</strain>
    </source>
</reference>
<gene>
    <name evidence="1" type="primary">metG</name>
    <name type="synonym">metS</name>
    <name type="ordered locus">UU197</name>
</gene>
<protein>
    <recommendedName>
        <fullName evidence="1">Methionine--tRNA ligase</fullName>
        <ecNumber evidence="1">6.1.1.10</ecNumber>
    </recommendedName>
    <alternativeName>
        <fullName evidence="1">Methionyl-tRNA synthetase</fullName>
        <shortName evidence="1">MetRS</shortName>
    </alternativeName>
</protein>
<proteinExistence type="inferred from homology"/>
<dbReference type="EC" id="6.1.1.10" evidence="1"/>
<dbReference type="EMBL" id="AF222894">
    <property type="protein sequence ID" value="AAF30604.1"/>
    <property type="molecule type" value="Genomic_DNA"/>
</dbReference>
<dbReference type="RefSeq" id="WP_006688946.1">
    <property type="nucleotide sequence ID" value="NC_002162.1"/>
</dbReference>
<dbReference type="SMR" id="Q9PQU6"/>
<dbReference type="STRING" id="273119.UU197"/>
<dbReference type="EnsemblBacteria" id="AAF30604">
    <property type="protein sequence ID" value="AAF30604"/>
    <property type="gene ID" value="UU197"/>
</dbReference>
<dbReference type="GeneID" id="29672640"/>
<dbReference type="KEGG" id="uur:UU197"/>
<dbReference type="eggNOG" id="COG0143">
    <property type="taxonomic scope" value="Bacteria"/>
</dbReference>
<dbReference type="HOGENOM" id="CLU_009710_9_4_14"/>
<dbReference type="OrthoDB" id="9810191at2"/>
<dbReference type="Proteomes" id="UP000000423">
    <property type="component" value="Chromosome"/>
</dbReference>
<dbReference type="GO" id="GO:0005737">
    <property type="term" value="C:cytoplasm"/>
    <property type="evidence" value="ECO:0007669"/>
    <property type="project" value="UniProtKB-SubCell"/>
</dbReference>
<dbReference type="GO" id="GO:0005524">
    <property type="term" value="F:ATP binding"/>
    <property type="evidence" value="ECO:0007669"/>
    <property type="project" value="UniProtKB-UniRule"/>
</dbReference>
<dbReference type="GO" id="GO:0046872">
    <property type="term" value="F:metal ion binding"/>
    <property type="evidence" value="ECO:0007669"/>
    <property type="project" value="UniProtKB-KW"/>
</dbReference>
<dbReference type="GO" id="GO:0004825">
    <property type="term" value="F:methionine-tRNA ligase activity"/>
    <property type="evidence" value="ECO:0007669"/>
    <property type="project" value="UniProtKB-UniRule"/>
</dbReference>
<dbReference type="GO" id="GO:0006431">
    <property type="term" value="P:methionyl-tRNA aminoacylation"/>
    <property type="evidence" value="ECO:0007669"/>
    <property type="project" value="UniProtKB-UniRule"/>
</dbReference>
<dbReference type="CDD" id="cd07957">
    <property type="entry name" value="Anticodon_Ia_Met"/>
    <property type="match status" value="1"/>
</dbReference>
<dbReference type="CDD" id="cd00814">
    <property type="entry name" value="MetRS_core"/>
    <property type="match status" value="1"/>
</dbReference>
<dbReference type="FunFam" id="2.170.220.10:FF:000002">
    <property type="entry name" value="Methionine--tRNA ligase"/>
    <property type="match status" value="1"/>
</dbReference>
<dbReference type="Gene3D" id="2.170.220.10">
    <property type="match status" value="1"/>
</dbReference>
<dbReference type="Gene3D" id="3.40.50.620">
    <property type="entry name" value="HUPs"/>
    <property type="match status" value="1"/>
</dbReference>
<dbReference type="Gene3D" id="1.10.730.10">
    <property type="entry name" value="Isoleucyl-tRNA Synthetase, Domain 1"/>
    <property type="match status" value="1"/>
</dbReference>
<dbReference type="HAMAP" id="MF_01228">
    <property type="entry name" value="Met_tRNA_synth_type2"/>
    <property type="match status" value="1"/>
</dbReference>
<dbReference type="InterPro" id="IPR041872">
    <property type="entry name" value="Anticodon_Met"/>
</dbReference>
<dbReference type="InterPro" id="IPR014758">
    <property type="entry name" value="Met-tRNA_synth"/>
</dbReference>
<dbReference type="InterPro" id="IPR023457">
    <property type="entry name" value="Met-tRNA_synth_2"/>
</dbReference>
<dbReference type="InterPro" id="IPR015413">
    <property type="entry name" value="Methionyl/Leucyl_tRNA_Synth"/>
</dbReference>
<dbReference type="InterPro" id="IPR033911">
    <property type="entry name" value="MetRS_core"/>
</dbReference>
<dbReference type="InterPro" id="IPR014729">
    <property type="entry name" value="Rossmann-like_a/b/a_fold"/>
</dbReference>
<dbReference type="InterPro" id="IPR009080">
    <property type="entry name" value="tRNAsynth_Ia_anticodon-bd"/>
</dbReference>
<dbReference type="NCBIfam" id="TIGR00398">
    <property type="entry name" value="metG"/>
    <property type="match status" value="1"/>
</dbReference>
<dbReference type="NCBIfam" id="NF008900">
    <property type="entry name" value="PRK12267.1"/>
    <property type="match status" value="1"/>
</dbReference>
<dbReference type="PANTHER" id="PTHR43326:SF1">
    <property type="entry name" value="METHIONINE--TRNA LIGASE, MITOCHONDRIAL"/>
    <property type="match status" value="1"/>
</dbReference>
<dbReference type="PANTHER" id="PTHR43326">
    <property type="entry name" value="METHIONYL-TRNA SYNTHETASE"/>
    <property type="match status" value="1"/>
</dbReference>
<dbReference type="Pfam" id="PF19303">
    <property type="entry name" value="Anticodon_3"/>
    <property type="match status" value="1"/>
</dbReference>
<dbReference type="Pfam" id="PF09334">
    <property type="entry name" value="tRNA-synt_1g"/>
    <property type="match status" value="1"/>
</dbReference>
<dbReference type="PRINTS" id="PR01041">
    <property type="entry name" value="TRNASYNTHMET"/>
</dbReference>
<dbReference type="SUPFAM" id="SSF47323">
    <property type="entry name" value="Anticodon-binding domain of a subclass of class I aminoacyl-tRNA synthetases"/>
    <property type="match status" value="1"/>
</dbReference>
<dbReference type="SUPFAM" id="SSF52374">
    <property type="entry name" value="Nucleotidylyl transferase"/>
    <property type="match status" value="1"/>
</dbReference>
<accession>Q9PQU6</accession>